<accession>P9WL49</accession>
<accession>L0TBW2</accession>
<accession>P71953</accession>
<dbReference type="EMBL" id="AL123456">
    <property type="protein sequence ID" value="CCP45454.1"/>
    <property type="molecule type" value="Genomic_DNA"/>
</dbReference>
<dbReference type="PIR" id="D70966">
    <property type="entry name" value="D70966"/>
</dbReference>
<dbReference type="RefSeq" id="NP_217172.1">
    <property type="nucleotide sequence ID" value="NC_000962.3"/>
</dbReference>
<dbReference type="RefSeq" id="WP_003899417.1">
    <property type="nucleotide sequence ID" value="NZ_NVQJ01000079.1"/>
</dbReference>
<dbReference type="STRING" id="83332.Rv2656c"/>
<dbReference type="PaxDb" id="83332-Rv2656c"/>
<dbReference type="GeneID" id="888179"/>
<dbReference type="KEGG" id="mtu:Rv2656c"/>
<dbReference type="KEGG" id="mtv:RVBD_2656c"/>
<dbReference type="TubercuList" id="Rv2656c"/>
<dbReference type="eggNOG" id="ENOG5031QDK">
    <property type="taxonomic scope" value="Bacteria"/>
</dbReference>
<dbReference type="InParanoid" id="P9WL49"/>
<dbReference type="OrthoDB" id="4374214at2"/>
<dbReference type="Proteomes" id="UP000001584">
    <property type="component" value="Chromosome"/>
</dbReference>
<dbReference type="InterPro" id="IPR024384">
    <property type="entry name" value="DUF2742"/>
</dbReference>
<dbReference type="Pfam" id="PF10888">
    <property type="entry name" value="DUF2742"/>
    <property type="match status" value="1"/>
</dbReference>
<gene>
    <name type="ordered locus">Rv2656c</name>
    <name type="ORF">MTCY441.25c</name>
</gene>
<protein>
    <recommendedName>
        <fullName>Uncharacterized protein Rv2656c</fullName>
    </recommendedName>
</protein>
<organism>
    <name type="scientific">Mycobacterium tuberculosis (strain ATCC 25618 / H37Rv)</name>
    <dbReference type="NCBI Taxonomy" id="83332"/>
    <lineage>
        <taxon>Bacteria</taxon>
        <taxon>Bacillati</taxon>
        <taxon>Actinomycetota</taxon>
        <taxon>Actinomycetes</taxon>
        <taxon>Mycobacteriales</taxon>
        <taxon>Mycobacteriaceae</taxon>
        <taxon>Mycobacterium</taxon>
        <taxon>Mycobacterium tuberculosis complex</taxon>
    </lineage>
</organism>
<reference key="1">
    <citation type="journal article" date="1998" name="Nature">
        <title>Deciphering the biology of Mycobacterium tuberculosis from the complete genome sequence.</title>
        <authorList>
            <person name="Cole S.T."/>
            <person name="Brosch R."/>
            <person name="Parkhill J."/>
            <person name="Garnier T."/>
            <person name="Churcher C.M."/>
            <person name="Harris D.E."/>
            <person name="Gordon S.V."/>
            <person name="Eiglmeier K."/>
            <person name="Gas S."/>
            <person name="Barry C.E. III"/>
            <person name="Tekaia F."/>
            <person name="Badcock K."/>
            <person name="Basham D."/>
            <person name="Brown D."/>
            <person name="Chillingworth T."/>
            <person name="Connor R."/>
            <person name="Davies R.M."/>
            <person name="Devlin K."/>
            <person name="Feltwell T."/>
            <person name="Gentles S."/>
            <person name="Hamlin N."/>
            <person name="Holroyd S."/>
            <person name="Hornsby T."/>
            <person name="Jagels K."/>
            <person name="Krogh A."/>
            <person name="McLean J."/>
            <person name="Moule S."/>
            <person name="Murphy L.D."/>
            <person name="Oliver S."/>
            <person name="Osborne J."/>
            <person name="Quail M.A."/>
            <person name="Rajandream M.A."/>
            <person name="Rogers J."/>
            <person name="Rutter S."/>
            <person name="Seeger K."/>
            <person name="Skelton S."/>
            <person name="Squares S."/>
            <person name="Squares R."/>
            <person name="Sulston J.E."/>
            <person name="Taylor K."/>
            <person name="Whitehead S."/>
            <person name="Barrell B.G."/>
        </authorList>
    </citation>
    <scope>NUCLEOTIDE SEQUENCE [LARGE SCALE GENOMIC DNA]</scope>
    <source>
        <strain>ATCC 25618 / H37Rv</strain>
    </source>
</reference>
<comment type="similarity">
    <text evidence="2">To M.tuberculosis Rv1583c.</text>
</comment>
<name>Y2656_MYCTU</name>
<evidence type="ECO:0000256" key="1">
    <source>
        <dbReference type="SAM" id="MobiDB-lite"/>
    </source>
</evidence>
<evidence type="ECO:0000305" key="2"/>
<sequence>MTAVGGSPPTRRCPATEDRAPATVATPSSTDPTASRAVSWWSVHEYVAPTLAAAVEWPMAGTPAWCDLDDTDPVKWAAICDAARHWALRVETCQAASAEASRDVSAAADWPAVSREIQRRRDAYIRRVVV</sequence>
<keyword id="KW-1185">Reference proteome</keyword>
<feature type="chain" id="PRO_0000104081" description="Uncharacterized protein Rv2656c">
    <location>
        <begin position="1"/>
        <end position="130"/>
    </location>
</feature>
<feature type="region of interest" description="Disordered" evidence="1">
    <location>
        <begin position="1"/>
        <end position="34"/>
    </location>
</feature>
<proteinExistence type="predicted"/>